<evidence type="ECO:0000255" key="1">
    <source>
        <dbReference type="HAMAP-Rule" id="MF_01361"/>
    </source>
</evidence>
<feature type="chain" id="PRO_0000256779" description="UPF0391 membrane protein RPC_3278">
    <location>
        <begin position="1"/>
        <end position="57"/>
    </location>
</feature>
<feature type="transmembrane region" description="Helical" evidence="1">
    <location>
        <begin position="4"/>
        <end position="24"/>
    </location>
</feature>
<feature type="transmembrane region" description="Helical" evidence="1">
    <location>
        <begin position="30"/>
        <end position="50"/>
    </location>
</feature>
<comment type="subcellular location">
    <subcellularLocation>
        <location evidence="1">Cell membrane</location>
        <topology evidence="1">Multi-pass membrane protein</topology>
    </subcellularLocation>
</comment>
<comment type="similarity">
    <text evidence="1">Belongs to the UPF0391 family.</text>
</comment>
<accession>Q211W6</accession>
<dbReference type="EMBL" id="CP000301">
    <property type="protein sequence ID" value="ABD88820.1"/>
    <property type="molecule type" value="Genomic_DNA"/>
</dbReference>
<dbReference type="STRING" id="316056.RPC_3278"/>
<dbReference type="KEGG" id="rpc:RPC_3278"/>
<dbReference type="eggNOG" id="COG5487">
    <property type="taxonomic scope" value="Bacteria"/>
</dbReference>
<dbReference type="HOGENOM" id="CLU_187346_2_1_5"/>
<dbReference type="GO" id="GO:0005886">
    <property type="term" value="C:plasma membrane"/>
    <property type="evidence" value="ECO:0007669"/>
    <property type="project" value="UniProtKB-SubCell"/>
</dbReference>
<dbReference type="HAMAP" id="MF_01361">
    <property type="entry name" value="UPF0391"/>
    <property type="match status" value="1"/>
</dbReference>
<dbReference type="InterPro" id="IPR009760">
    <property type="entry name" value="DUF1328"/>
</dbReference>
<dbReference type="NCBIfam" id="NF010228">
    <property type="entry name" value="PRK13682.1-3"/>
    <property type="match status" value="1"/>
</dbReference>
<dbReference type="NCBIfam" id="NF010229">
    <property type="entry name" value="PRK13682.1-4"/>
    <property type="match status" value="1"/>
</dbReference>
<dbReference type="Pfam" id="PF07043">
    <property type="entry name" value="DUF1328"/>
    <property type="match status" value="1"/>
</dbReference>
<dbReference type="PIRSF" id="PIRSF036466">
    <property type="entry name" value="UCP036466"/>
    <property type="match status" value="1"/>
</dbReference>
<reference key="1">
    <citation type="submission" date="2006-03" db="EMBL/GenBank/DDBJ databases">
        <title>Complete sequence of Rhodopseudomonas palustris BisB18.</title>
        <authorList>
            <consortium name="US DOE Joint Genome Institute"/>
            <person name="Copeland A."/>
            <person name="Lucas S."/>
            <person name="Lapidus A."/>
            <person name="Barry K."/>
            <person name="Detter J.C."/>
            <person name="Glavina del Rio T."/>
            <person name="Hammon N."/>
            <person name="Israni S."/>
            <person name="Dalin E."/>
            <person name="Tice H."/>
            <person name="Pitluck S."/>
            <person name="Chain P."/>
            <person name="Malfatti S."/>
            <person name="Shin M."/>
            <person name="Vergez L."/>
            <person name="Schmutz J."/>
            <person name="Larimer F."/>
            <person name="Land M."/>
            <person name="Hauser L."/>
            <person name="Pelletier D.A."/>
            <person name="Kyrpides N."/>
            <person name="Anderson I."/>
            <person name="Oda Y."/>
            <person name="Harwood C.S."/>
            <person name="Richardson P."/>
        </authorList>
    </citation>
    <scope>NUCLEOTIDE SEQUENCE [LARGE SCALE GENOMIC DNA]</scope>
    <source>
        <strain>BisB18</strain>
    </source>
</reference>
<sequence length="57" mass="5914">MLGWVITFLVVALIAGILGFGGIAGASIEIAKIIFFIAVVLFLVSAVVGLARGRNRV</sequence>
<protein>
    <recommendedName>
        <fullName evidence="1">UPF0391 membrane protein RPC_3278</fullName>
    </recommendedName>
</protein>
<proteinExistence type="inferred from homology"/>
<organism>
    <name type="scientific">Rhodopseudomonas palustris (strain BisB18)</name>
    <dbReference type="NCBI Taxonomy" id="316056"/>
    <lineage>
        <taxon>Bacteria</taxon>
        <taxon>Pseudomonadati</taxon>
        <taxon>Pseudomonadota</taxon>
        <taxon>Alphaproteobacteria</taxon>
        <taxon>Hyphomicrobiales</taxon>
        <taxon>Nitrobacteraceae</taxon>
        <taxon>Rhodopseudomonas</taxon>
    </lineage>
</organism>
<keyword id="KW-1003">Cell membrane</keyword>
<keyword id="KW-0472">Membrane</keyword>
<keyword id="KW-0812">Transmembrane</keyword>
<keyword id="KW-1133">Transmembrane helix</keyword>
<gene>
    <name type="ordered locus">RPC_3278</name>
</gene>
<name>Y3278_RHOPB</name>